<feature type="chain" id="PRO_0000218951" description="Signal peptidase complex subunit 3">
    <location>
        <begin position="1"/>
        <end position="184"/>
    </location>
</feature>
<feature type="topological domain" description="Cytoplasmic" evidence="2">
    <location>
        <begin position="1"/>
        <end position="14"/>
    </location>
</feature>
<feature type="transmembrane region" description="Helical; Signal-anchor for type II membrane protein" evidence="2">
    <location>
        <begin position="15"/>
        <end position="35"/>
    </location>
</feature>
<feature type="topological domain" description="Lumenal" evidence="2">
    <location>
        <begin position="36"/>
        <end position="184"/>
    </location>
</feature>
<feature type="glycosylation site" description="N-linked (GlcNAc...) asparagine" evidence="2">
    <location>
        <position position="102"/>
    </location>
</feature>
<feature type="glycosylation site" description="N-linked (GlcNAc...) asparagine" evidence="2">
    <location>
        <position position="173"/>
    </location>
</feature>
<protein>
    <recommendedName>
        <fullName>Signal peptidase complex subunit 3</fullName>
    </recommendedName>
    <alternativeName>
        <fullName>Microsomal signal peptidase subunit 3</fullName>
    </alternativeName>
</protein>
<accession>Q12133</accession>
<accession>D6VY67</accession>
<reference key="1">
    <citation type="journal article" date="1997" name="J. Biol. Chem.">
        <title>The yeast SPC22/23 homolog Spc3p is essential for signal peptidase activity.</title>
        <authorList>
            <person name="Meyer H.A."/>
            <person name="Hartmann E."/>
        </authorList>
    </citation>
    <scope>NUCLEOTIDE SEQUENCE [GENOMIC DNA]</scope>
    <scope>FUNCTION</scope>
    <scope>IDENTIFICATION IN THE SIGNAL PEPTIDASE COMPLEX</scope>
</reference>
<reference key="2">
    <citation type="journal article" date="1997" name="Nature">
        <title>The nucleotide sequence of Saccharomyces cerevisiae chromosome XII.</title>
        <authorList>
            <person name="Johnston M."/>
            <person name="Hillier L.W."/>
            <person name="Riles L."/>
            <person name="Albermann K."/>
            <person name="Andre B."/>
            <person name="Ansorge W."/>
            <person name="Benes V."/>
            <person name="Brueckner M."/>
            <person name="Delius H."/>
            <person name="Dubois E."/>
            <person name="Duesterhoeft A."/>
            <person name="Entian K.-D."/>
            <person name="Floeth M."/>
            <person name="Goffeau A."/>
            <person name="Hebling U."/>
            <person name="Heumann K."/>
            <person name="Heuss-Neitzel D."/>
            <person name="Hilbert H."/>
            <person name="Hilger F."/>
            <person name="Kleine K."/>
            <person name="Koetter P."/>
            <person name="Louis E.J."/>
            <person name="Messenguy F."/>
            <person name="Mewes H.-W."/>
            <person name="Miosga T."/>
            <person name="Moestl D."/>
            <person name="Mueller-Auer S."/>
            <person name="Nentwich U."/>
            <person name="Obermaier B."/>
            <person name="Piravandi E."/>
            <person name="Pohl T.M."/>
            <person name="Portetelle D."/>
            <person name="Purnelle B."/>
            <person name="Rechmann S."/>
            <person name="Rieger M."/>
            <person name="Rinke M."/>
            <person name="Rose M."/>
            <person name="Scharfe M."/>
            <person name="Scherens B."/>
            <person name="Scholler P."/>
            <person name="Schwager C."/>
            <person name="Schwarz S."/>
            <person name="Underwood A.P."/>
            <person name="Urrestarazu L.A."/>
            <person name="Vandenbol M."/>
            <person name="Verhasselt P."/>
            <person name="Vierendeels F."/>
            <person name="Voet M."/>
            <person name="Volckaert G."/>
            <person name="Voss H."/>
            <person name="Wambutt R."/>
            <person name="Wedler E."/>
            <person name="Wedler H."/>
            <person name="Zimmermann F.K."/>
            <person name="Zollner A."/>
            <person name="Hani J."/>
            <person name="Hoheisel J.D."/>
        </authorList>
    </citation>
    <scope>NUCLEOTIDE SEQUENCE [LARGE SCALE GENOMIC DNA]</scope>
    <source>
        <strain>ATCC 204508 / S288c</strain>
    </source>
</reference>
<reference key="3">
    <citation type="journal article" date="2014" name="G3 (Bethesda)">
        <title>The reference genome sequence of Saccharomyces cerevisiae: Then and now.</title>
        <authorList>
            <person name="Engel S.R."/>
            <person name="Dietrich F.S."/>
            <person name="Fisk D.G."/>
            <person name="Binkley G."/>
            <person name="Balakrishnan R."/>
            <person name="Costanzo M.C."/>
            <person name="Dwight S.S."/>
            <person name="Hitz B.C."/>
            <person name="Karra K."/>
            <person name="Nash R.S."/>
            <person name="Weng S."/>
            <person name="Wong E.D."/>
            <person name="Lloyd P."/>
            <person name="Skrzypek M.S."/>
            <person name="Miyasato S.R."/>
            <person name="Simison M."/>
            <person name="Cherry J.M."/>
        </authorList>
    </citation>
    <scope>GENOME REANNOTATION</scope>
    <source>
        <strain>ATCC 204508 / S288c</strain>
    </source>
</reference>
<reference key="4">
    <citation type="journal article" date="2007" name="Genome Res.">
        <title>Approaching a complete repository of sequence-verified protein-encoding clones for Saccharomyces cerevisiae.</title>
        <authorList>
            <person name="Hu Y."/>
            <person name="Rolfs A."/>
            <person name="Bhullar B."/>
            <person name="Murthy T.V.S."/>
            <person name="Zhu C."/>
            <person name="Berger M.F."/>
            <person name="Camargo A.A."/>
            <person name="Kelley F."/>
            <person name="McCarron S."/>
            <person name="Jepson D."/>
            <person name="Richardson A."/>
            <person name="Raphael J."/>
            <person name="Moreira D."/>
            <person name="Taycher E."/>
            <person name="Zuo D."/>
            <person name="Mohr S."/>
            <person name="Kane M.F."/>
            <person name="Williamson J."/>
            <person name="Simpson A.J.G."/>
            <person name="Bulyk M.L."/>
            <person name="Harlow E."/>
            <person name="Marsischky G."/>
            <person name="Kolodner R.D."/>
            <person name="LaBaer J."/>
        </authorList>
    </citation>
    <scope>NUCLEOTIDE SEQUENCE [GENOMIC DNA]</scope>
    <source>
        <strain>ATCC 204508 / S288c</strain>
    </source>
</reference>
<reference key="5">
    <citation type="journal article" date="1997" name="J. Biol. Chem.">
        <title>In addition to SEC11, a newly identified gene, SPC3, is essential for signal peptidase activity in the yeast endoplasmic reticulum.</title>
        <authorList>
            <person name="Fang H."/>
            <person name="Mullins C."/>
            <person name="Green N."/>
        </authorList>
    </citation>
    <scope>FUNCTION</scope>
</reference>
<reference key="6">
    <citation type="journal article" date="1999" name="J. Biol. Chem.">
        <title>The catalytic mechanism of endoplasmic reticulum signal peptidase appears to be distinct from most eubacterial signal peptidases.</title>
        <authorList>
            <person name="VanValkenburgh C."/>
            <person name="Chen X."/>
            <person name="Mullins C."/>
            <person name="Fang H."/>
            <person name="Green N."/>
        </authorList>
    </citation>
    <scope>INTERACTION WITH SEC11</scope>
</reference>
<reference key="7">
    <citation type="journal article" date="2003" name="Nature">
        <title>Global analysis of protein localization in budding yeast.</title>
        <authorList>
            <person name="Huh W.-K."/>
            <person name="Falvo J.V."/>
            <person name="Gerke L.C."/>
            <person name="Carroll A.S."/>
            <person name="Howson R.W."/>
            <person name="Weissman J.S."/>
            <person name="O'Shea E.K."/>
        </authorList>
    </citation>
    <scope>SUBCELLULAR LOCATION [LARGE SCALE ANALYSIS]</scope>
</reference>
<reference key="8">
    <citation type="journal article" date="2003" name="Nature">
        <title>Global analysis of protein expression in yeast.</title>
        <authorList>
            <person name="Ghaemmaghami S."/>
            <person name="Huh W.-K."/>
            <person name="Bower K."/>
            <person name="Howson R.W."/>
            <person name="Belle A."/>
            <person name="Dephoure N."/>
            <person name="O'Shea E.K."/>
            <person name="Weissman J.S."/>
        </authorList>
    </citation>
    <scope>LEVEL OF PROTEIN EXPRESSION [LARGE SCALE ANALYSIS]</scope>
</reference>
<reference key="9">
    <citation type="journal article" date="2012" name="Proc. Natl. Acad. Sci. U.S.A.">
        <title>N-terminal acetylome analyses and functional insights of the N-terminal acetyltransferase NatB.</title>
        <authorList>
            <person name="Van Damme P."/>
            <person name="Lasa M."/>
            <person name="Polevoda B."/>
            <person name="Gazquez C."/>
            <person name="Elosegui-Artola A."/>
            <person name="Kim D.S."/>
            <person name="De Juan-Pardo E."/>
            <person name="Demeyer K."/>
            <person name="Hole K."/>
            <person name="Larrea E."/>
            <person name="Timmerman E."/>
            <person name="Prieto J."/>
            <person name="Arnesen T."/>
            <person name="Sherman F."/>
            <person name="Gevaert K."/>
            <person name="Aldabe R."/>
        </authorList>
    </citation>
    <scope>IDENTIFICATION BY MASS SPECTROMETRY [LARGE SCALE ANALYSIS]</scope>
</reference>
<organism>
    <name type="scientific">Saccharomyces cerevisiae (strain ATCC 204508 / S288c)</name>
    <name type="common">Baker's yeast</name>
    <dbReference type="NCBI Taxonomy" id="559292"/>
    <lineage>
        <taxon>Eukaryota</taxon>
        <taxon>Fungi</taxon>
        <taxon>Dikarya</taxon>
        <taxon>Ascomycota</taxon>
        <taxon>Saccharomycotina</taxon>
        <taxon>Saccharomycetes</taxon>
        <taxon>Saccharomycetales</taxon>
        <taxon>Saccharomycetaceae</taxon>
        <taxon>Saccharomyces</taxon>
    </lineage>
</organism>
<proteinExistence type="evidence at protein level"/>
<keyword id="KW-0256">Endoplasmic reticulum</keyword>
<keyword id="KW-0325">Glycoprotein</keyword>
<keyword id="KW-0472">Membrane</keyword>
<keyword id="KW-1185">Reference proteome</keyword>
<keyword id="KW-0735">Signal-anchor</keyword>
<keyword id="KW-0812">Transmembrane</keyword>
<keyword id="KW-1133">Transmembrane helix</keyword>
<comment type="function">
    <text evidence="6 7">Essential component of the signal peptidase complex (SPC) which catalyzes the cleavage of N-terminal signal sequences from nascent proteins as they are translocated into the lumen of the endoplasmic reticulum (PubMed:9148930, PubMed:9148931). Essential for the SPC catalytic activity, possibly by stabilizing and positioning the active center of the complex close to the lumenal surface (PubMed:9148930, PubMed:9148931). Essential for viability (PubMed:9148930, PubMed:9148931).</text>
</comment>
<comment type="subunit">
    <text evidence="1 3 7">Component of the signal peptidase complex (SPC) composed of a catalytic subunit SEC11 and three accessory subunits SPC1, SPC2 and SPC3 (PubMed:9148931). The complex induces a local thinning of the ER membrane which is used to measure the length of the signal peptide (SP) h-region of protein substrates (By similarity). This ensures the selectivity of the complex towards h-regions shorter than 18-20 amino acids (By similarity). Interacts with SEC11 (PubMed:10206957). SPC associates with the translocon complex (PubMed:9148931).</text>
</comment>
<comment type="interaction">
    <interactant intactId="EBI-17829">
        <id>Q12133</id>
    </interactant>
    <interactant intactId="EBI-16513">
        <id>P15367</id>
        <label>SEC11</label>
    </interactant>
    <organismsDiffer>false</organismsDiffer>
    <experiments>4</experiments>
</comment>
<comment type="subcellular location">
    <subcellularLocation>
        <location evidence="4">Endoplasmic reticulum membrane</location>
        <topology evidence="8">Single-pass type II membrane protein</topology>
    </subcellularLocation>
</comment>
<comment type="miscellaneous">
    <text evidence="5">Present with 6840 molecules/cell in log phase SD medium.</text>
</comment>
<comment type="similarity">
    <text evidence="8">Belongs to the SPCS3 family.</text>
</comment>
<gene>
    <name type="primary">SPC3</name>
    <name type="ordered locus">YLR066W</name>
    <name type="ORF">L2186</name>
</gene>
<dbReference type="EMBL" id="U92975">
    <property type="protein sequence ID" value="AAB51390.1"/>
    <property type="molecule type" value="Genomic_DNA"/>
</dbReference>
<dbReference type="EMBL" id="X94607">
    <property type="protein sequence ID" value="CAA64312.1"/>
    <property type="molecule type" value="Genomic_DNA"/>
</dbReference>
<dbReference type="EMBL" id="Z73238">
    <property type="protein sequence ID" value="CAA97622.1"/>
    <property type="molecule type" value="Genomic_DNA"/>
</dbReference>
<dbReference type="EMBL" id="AY558205">
    <property type="protein sequence ID" value="AAS56531.1"/>
    <property type="molecule type" value="Genomic_DNA"/>
</dbReference>
<dbReference type="EMBL" id="BK006945">
    <property type="protein sequence ID" value="DAA09383.1"/>
    <property type="molecule type" value="Genomic_DNA"/>
</dbReference>
<dbReference type="PIR" id="S61639">
    <property type="entry name" value="S61639"/>
</dbReference>
<dbReference type="RefSeq" id="NP_013167.1">
    <property type="nucleotide sequence ID" value="NM_001181953.1"/>
</dbReference>
<dbReference type="SMR" id="Q12133"/>
<dbReference type="BioGRID" id="31340">
    <property type="interactions" value="134"/>
</dbReference>
<dbReference type="ComplexPortal" id="CPX-1835">
    <property type="entry name" value="Signal peptidase complex"/>
</dbReference>
<dbReference type="DIP" id="DIP-5083N"/>
<dbReference type="FunCoup" id="Q12133">
    <property type="interactions" value="545"/>
</dbReference>
<dbReference type="IntAct" id="Q12133">
    <property type="interactions" value="17"/>
</dbReference>
<dbReference type="MINT" id="Q12133"/>
<dbReference type="STRING" id="4932.YLR066W"/>
<dbReference type="MEROPS" id="X45.001"/>
<dbReference type="GlyCosmos" id="Q12133">
    <property type="glycosylation" value="2 sites, No reported glycans"/>
</dbReference>
<dbReference type="GlyGen" id="Q12133">
    <property type="glycosylation" value="2 sites"/>
</dbReference>
<dbReference type="PaxDb" id="4932-YLR066W"/>
<dbReference type="PeptideAtlas" id="Q12133"/>
<dbReference type="EnsemblFungi" id="YLR066W_mRNA">
    <property type="protein sequence ID" value="YLR066W"/>
    <property type="gene ID" value="YLR066W"/>
</dbReference>
<dbReference type="GeneID" id="850755"/>
<dbReference type="KEGG" id="sce:YLR066W"/>
<dbReference type="AGR" id="SGD:S000004056"/>
<dbReference type="SGD" id="S000004056">
    <property type="gene designation" value="SPC3"/>
</dbReference>
<dbReference type="VEuPathDB" id="FungiDB:YLR066W"/>
<dbReference type="eggNOG" id="KOG3372">
    <property type="taxonomic scope" value="Eukaryota"/>
</dbReference>
<dbReference type="GeneTree" id="ENSGT00940000169388"/>
<dbReference type="HOGENOM" id="CLU_068714_2_1_1"/>
<dbReference type="InParanoid" id="Q12133"/>
<dbReference type="OMA" id="LHWNIQP"/>
<dbReference type="OrthoDB" id="10261524at2759"/>
<dbReference type="BioCyc" id="YEAST:G3O-32219-MONOMER"/>
<dbReference type="BioGRID-ORCS" id="850755">
    <property type="hits" value="0 hits in 10 CRISPR screens"/>
</dbReference>
<dbReference type="ChiTaRS" id="SPC3">
    <property type="organism name" value="yeast"/>
</dbReference>
<dbReference type="PRO" id="PR:Q12133"/>
<dbReference type="Proteomes" id="UP000002311">
    <property type="component" value="Chromosome XII"/>
</dbReference>
<dbReference type="RNAct" id="Q12133">
    <property type="molecule type" value="protein"/>
</dbReference>
<dbReference type="GO" id="GO:0005783">
    <property type="term" value="C:endoplasmic reticulum"/>
    <property type="evidence" value="ECO:0007005"/>
    <property type="project" value="SGD"/>
</dbReference>
<dbReference type="GO" id="GO:0005789">
    <property type="term" value="C:endoplasmic reticulum membrane"/>
    <property type="evidence" value="ECO:0000303"/>
    <property type="project" value="ComplexPortal"/>
</dbReference>
<dbReference type="GO" id="GO:0005787">
    <property type="term" value="C:signal peptidase complex"/>
    <property type="evidence" value="ECO:0000314"/>
    <property type="project" value="SGD"/>
</dbReference>
<dbReference type="GO" id="GO:0045047">
    <property type="term" value="P:protein targeting to ER"/>
    <property type="evidence" value="ECO:0000315"/>
    <property type="project" value="SGD"/>
</dbReference>
<dbReference type="GO" id="GO:0006465">
    <property type="term" value="P:signal peptide processing"/>
    <property type="evidence" value="ECO:0000314"/>
    <property type="project" value="SGD"/>
</dbReference>
<dbReference type="InterPro" id="IPR007653">
    <property type="entry name" value="SPC3"/>
</dbReference>
<dbReference type="PANTHER" id="PTHR12804">
    <property type="entry name" value="MICROSOMAL SIGNAL PEPTIDASE 23 KD SUBUNIT SPC22/23"/>
    <property type="match status" value="1"/>
</dbReference>
<dbReference type="PANTHER" id="PTHR12804:SF0">
    <property type="entry name" value="SIGNAL PEPTIDASE COMPLEX SUBUNIT 3"/>
    <property type="match status" value="1"/>
</dbReference>
<dbReference type="Pfam" id="PF04573">
    <property type="entry name" value="SPC22"/>
    <property type="match status" value="1"/>
</dbReference>
<dbReference type="PIRSF" id="PIRSF016089">
    <property type="entry name" value="SPC22"/>
    <property type="match status" value="1"/>
</dbReference>
<name>SPC3_YEAST</name>
<sequence length="184" mass="21349">MFSFVQRFQNVSNQAFSMGIVMVVFIMASSYYQLINNNAFSVPSNIDNVKTLINVRTSRYFGSQRGKAKENMKIKFDLNTDLTPLFNWNTKQVFVYLTAEYNSTEKITSEVTFWDKIIKSKDDAVIDVNDLRSKYSIWDIEDGKFEGKDLVFKLHWNVQPWVGLLTYGETVGNYTLTVENKNKV</sequence>
<evidence type="ECO:0000250" key="1">
    <source>
        <dbReference type="UniProtKB" id="P67812"/>
    </source>
</evidence>
<evidence type="ECO:0000255" key="2"/>
<evidence type="ECO:0000269" key="3">
    <source>
    </source>
</evidence>
<evidence type="ECO:0000269" key="4">
    <source>
    </source>
</evidence>
<evidence type="ECO:0000269" key="5">
    <source>
    </source>
</evidence>
<evidence type="ECO:0000269" key="6">
    <source>
    </source>
</evidence>
<evidence type="ECO:0000269" key="7">
    <source>
    </source>
</evidence>
<evidence type="ECO:0000305" key="8"/>